<comment type="function">
    <text evidence="1">Involved in the gluconeogenesis. Catalyzes the conversion of oxaloacetate (OAA) to phosphoenolpyruvate (PEP) through direct phosphoryl transfer between the nucleoside triphosphate and OAA.</text>
</comment>
<comment type="catalytic activity">
    <reaction evidence="1">
        <text>oxaloacetate + ATP = phosphoenolpyruvate + ADP + CO2</text>
        <dbReference type="Rhea" id="RHEA:18617"/>
        <dbReference type="ChEBI" id="CHEBI:16452"/>
        <dbReference type="ChEBI" id="CHEBI:16526"/>
        <dbReference type="ChEBI" id="CHEBI:30616"/>
        <dbReference type="ChEBI" id="CHEBI:58702"/>
        <dbReference type="ChEBI" id="CHEBI:456216"/>
        <dbReference type="EC" id="4.1.1.49"/>
    </reaction>
</comment>
<comment type="cofactor">
    <cofactor evidence="1">
        <name>Mn(2+)</name>
        <dbReference type="ChEBI" id="CHEBI:29035"/>
    </cofactor>
    <text evidence="1">Binds 1 Mn(2+) ion per subunit.</text>
</comment>
<comment type="pathway">
    <text evidence="1">Carbohydrate biosynthesis; gluconeogenesis.</text>
</comment>
<comment type="subunit">
    <text evidence="1">Monomer.</text>
</comment>
<comment type="subcellular location">
    <subcellularLocation>
        <location evidence="1">Cytoplasm</location>
    </subcellularLocation>
</comment>
<comment type="similarity">
    <text evidence="1">Belongs to the phosphoenolpyruvate carboxykinase (ATP) family.</text>
</comment>
<organism>
    <name type="scientific">Escherichia coli O81 (strain ED1a)</name>
    <dbReference type="NCBI Taxonomy" id="585397"/>
    <lineage>
        <taxon>Bacteria</taxon>
        <taxon>Pseudomonadati</taxon>
        <taxon>Pseudomonadota</taxon>
        <taxon>Gammaproteobacteria</taxon>
        <taxon>Enterobacterales</taxon>
        <taxon>Enterobacteriaceae</taxon>
        <taxon>Escherichia</taxon>
    </lineage>
</organism>
<gene>
    <name evidence="1" type="primary">pckA</name>
    <name type="ordered locus">ECED1_4063</name>
</gene>
<sequence length="540" mass="59629">MRVNNGLTPQELEAYGISDVHDIVYNPSYDLLYQEELDPSLTGYERGVLTNLGAVAVDTGIFTGRSPKDKYIVRDDTTRDTFWWADKGKGKNDNKPLSPETWQHLKGLVTKQLSGKRLFVVDAFCGANPDTRLSVRFITEVAWQAHFVKNMFIRPSDEELAGFKPDFIVMNGAKCTNPQWKEQGLNSENFVAFNLTERMQLIGGTWYGGEMKKGMFSMMNYLLPLKGIASMHCSANVGEKGDVAVFFGLSGTGKTTLSTDPKRRLIGDDEHGWDDDGVFNFEGGCYAKTIKLSKEAEPEIYNAIRRDALLENVTVREDGTIDFDDGSKTENTRVSYPIYHIENIVKPVSKAGHATKVIFLTADAFGVLPPVSRLTADQTQYHFLSGFTAKLAGTERGITEPTPTFSACFGAAFLSLHPTQYAEVLVKRMQAAGAQAYLVNTGWNGTGKRISIKDTRAIIDAILNGSLDNAETFTLPMFNLAIPTELPGVDTKILDPRNTYASPEQWQEKAETLAKLFIDNFDKYTDTPAGAALVAAGPKL</sequence>
<proteinExistence type="inferred from homology"/>
<evidence type="ECO:0000255" key="1">
    <source>
        <dbReference type="HAMAP-Rule" id="MF_00453"/>
    </source>
</evidence>
<accession>B7N136</accession>
<name>PCKA_ECO81</name>
<keyword id="KW-0007">Acetylation</keyword>
<keyword id="KW-0067">ATP-binding</keyword>
<keyword id="KW-0963">Cytoplasm</keyword>
<keyword id="KW-0210">Decarboxylase</keyword>
<keyword id="KW-0312">Gluconeogenesis</keyword>
<keyword id="KW-0456">Lyase</keyword>
<keyword id="KW-0464">Manganese</keyword>
<keyword id="KW-0479">Metal-binding</keyword>
<keyword id="KW-0547">Nucleotide-binding</keyword>
<dbReference type="EC" id="4.1.1.49" evidence="1"/>
<dbReference type="EMBL" id="CU928162">
    <property type="protein sequence ID" value="CAR10054.1"/>
    <property type="molecule type" value="Genomic_DNA"/>
</dbReference>
<dbReference type="RefSeq" id="WP_001309803.1">
    <property type="nucleotide sequence ID" value="NC_011745.1"/>
</dbReference>
<dbReference type="SMR" id="B7N136"/>
<dbReference type="GeneID" id="86862199"/>
<dbReference type="KEGG" id="ecq:ECED1_4063"/>
<dbReference type="HOGENOM" id="CLU_018247_0_1_6"/>
<dbReference type="UniPathway" id="UPA00138"/>
<dbReference type="Proteomes" id="UP000000748">
    <property type="component" value="Chromosome"/>
</dbReference>
<dbReference type="GO" id="GO:0005829">
    <property type="term" value="C:cytosol"/>
    <property type="evidence" value="ECO:0007669"/>
    <property type="project" value="TreeGrafter"/>
</dbReference>
<dbReference type="GO" id="GO:0005524">
    <property type="term" value="F:ATP binding"/>
    <property type="evidence" value="ECO:0007669"/>
    <property type="project" value="UniProtKB-UniRule"/>
</dbReference>
<dbReference type="GO" id="GO:0046872">
    <property type="term" value="F:metal ion binding"/>
    <property type="evidence" value="ECO:0007669"/>
    <property type="project" value="UniProtKB-KW"/>
</dbReference>
<dbReference type="GO" id="GO:0004612">
    <property type="term" value="F:phosphoenolpyruvate carboxykinase (ATP) activity"/>
    <property type="evidence" value="ECO:0007669"/>
    <property type="project" value="UniProtKB-UniRule"/>
</dbReference>
<dbReference type="GO" id="GO:0006094">
    <property type="term" value="P:gluconeogenesis"/>
    <property type="evidence" value="ECO:0007669"/>
    <property type="project" value="UniProtKB-UniRule"/>
</dbReference>
<dbReference type="CDD" id="cd00484">
    <property type="entry name" value="PEPCK_ATP"/>
    <property type="match status" value="1"/>
</dbReference>
<dbReference type="FunFam" id="2.170.8.10:FF:000001">
    <property type="entry name" value="Phosphoenolpyruvate carboxykinase (ATP)"/>
    <property type="match status" value="1"/>
</dbReference>
<dbReference type="FunFam" id="3.40.449.10:FF:000001">
    <property type="entry name" value="Phosphoenolpyruvate carboxykinase (ATP)"/>
    <property type="match status" value="1"/>
</dbReference>
<dbReference type="Gene3D" id="3.90.228.20">
    <property type="match status" value="1"/>
</dbReference>
<dbReference type="Gene3D" id="3.40.449.10">
    <property type="entry name" value="Phosphoenolpyruvate Carboxykinase, domain 1"/>
    <property type="match status" value="1"/>
</dbReference>
<dbReference type="Gene3D" id="2.170.8.10">
    <property type="entry name" value="Phosphoenolpyruvate Carboxykinase, domain 2"/>
    <property type="match status" value="1"/>
</dbReference>
<dbReference type="HAMAP" id="MF_00453">
    <property type="entry name" value="PEPCK_ATP"/>
    <property type="match status" value="1"/>
</dbReference>
<dbReference type="InterPro" id="IPR001272">
    <property type="entry name" value="PEP_carboxykinase_ATP"/>
</dbReference>
<dbReference type="InterPro" id="IPR013035">
    <property type="entry name" value="PEP_carboxykinase_C"/>
</dbReference>
<dbReference type="InterPro" id="IPR008210">
    <property type="entry name" value="PEP_carboxykinase_N"/>
</dbReference>
<dbReference type="InterPro" id="IPR015994">
    <property type="entry name" value="PEPCK_ATP_CS"/>
</dbReference>
<dbReference type="NCBIfam" id="TIGR00224">
    <property type="entry name" value="pckA"/>
    <property type="match status" value="1"/>
</dbReference>
<dbReference type="NCBIfam" id="NF006819">
    <property type="entry name" value="PRK09344.1-1"/>
    <property type="match status" value="1"/>
</dbReference>
<dbReference type="NCBIfam" id="NF006820">
    <property type="entry name" value="PRK09344.1-2"/>
    <property type="match status" value="1"/>
</dbReference>
<dbReference type="NCBIfam" id="NF006821">
    <property type="entry name" value="PRK09344.1-3"/>
    <property type="match status" value="1"/>
</dbReference>
<dbReference type="PANTHER" id="PTHR30031:SF0">
    <property type="entry name" value="PHOSPHOENOLPYRUVATE CARBOXYKINASE (ATP)"/>
    <property type="match status" value="1"/>
</dbReference>
<dbReference type="PANTHER" id="PTHR30031">
    <property type="entry name" value="PHOSPHOENOLPYRUVATE CARBOXYKINASE ATP"/>
    <property type="match status" value="1"/>
</dbReference>
<dbReference type="Pfam" id="PF01293">
    <property type="entry name" value="PEPCK_ATP"/>
    <property type="match status" value="1"/>
</dbReference>
<dbReference type="PIRSF" id="PIRSF006294">
    <property type="entry name" value="PEP_crbxkin"/>
    <property type="match status" value="1"/>
</dbReference>
<dbReference type="SUPFAM" id="SSF68923">
    <property type="entry name" value="PEP carboxykinase N-terminal domain"/>
    <property type="match status" value="1"/>
</dbReference>
<dbReference type="SUPFAM" id="SSF53795">
    <property type="entry name" value="PEP carboxykinase-like"/>
    <property type="match status" value="1"/>
</dbReference>
<dbReference type="PROSITE" id="PS00532">
    <property type="entry name" value="PEPCK_ATP"/>
    <property type="match status" value="1"/>
</dbReference>
<reference key="1">
    <citation type="journal article" date="2009" name="PLoS Genet.">
        <title>Organised genome dynamics in the Escherichia coli species results in highly diverse adaptive paths.</title>
        <authorList>
            <person name="Touchon M."/>
            <person name="Hoede C."/>
            <person name="Tenaillon O."/>
            <person name="Barbe V."/>
            <person name="Baeriswyl S."/>
            <person name="Bidet P."/>
            <person name="Bingen E."/>
            <person name="Bonacorsi S."/>
            <person name="Bouchier C."/>
            <person name="Bouvet O."/>
            <person name="Calteau A."/>
            <person name="Chiapello H."/>
            <person name="Clermont O."/>
            <person name="Cruveiller S."/>
            <person name="Danchin A."/>
            <person name="Diard M."/>
            <person name="Dossat C."/>
            <person name="Karoui M.E."/>
            <person name="Frapy E."/>
            <person name="Garry L."/>
            <person name="Ghigo J.M."/>
            <person name="Gilles A.M."/>
            <person name="Johnson J."/>
            <person name="Le Bouguenec C."/>
            <person name="Lescat M."/>
            <person name="Mangenot S."/>
            <person name="Martinez-Jehanne V."/>
            <person name="Matic I."/>
            <person name="Nassif X."/>
            <person name="Oztas S."/>
            <person name="Petit M.A."/>
            <person name="Pichon C."/>
            <person name="Rouy Z."/>
            <person name="Ruf C.S."/>
            <person name="Schneider D."/>
            <person name="Tourret J."/>
            <person name="Vacherie B."/>
            <person name="Vallenet D."/>
            <person name="Medigue C."/>
            <person name="Rocha E.P.C."/>
            <person name="Denamur E."/>
        </authorList>
    </citation>
    <scope>NUCLEOTIDE SEQUENCE [LARGE SCALE GENOMIC DNA]</scope>
    <source>
        <strain>ED1a</strain>
    </source>
</reference>
<protein>
    <recommendedName>
        <fullName evidence="1">Phosphoenolpyruvate carboxykinase (ATP)</fullName>
        <shortName evidence="1">PCK</shortName>
        <shortName evidence="1">PEP carboxykinase</shortName>
        <shortName evidence="1">PEPCK</shortName>
        <ecNumber evidence="1">4.1.1.49</ecNumber>
    </recommendedName>
</protein>
<feature type="chain" id="PRO_1000192315" description="Phosphoenolpyruvate carboxykinase (ATP)">
    <location>
        <begin position="1"/>
        <end position="540"/>
    </location>
</feature>
<feature type="binding site" evidence="1">
    <location>
        <position position="65"/>
    </location>
    <ligand>
        <name>substrate</name>
    </ligand>
</feature>
<feature type="binding site" evidence="1">
    <location>
        <position position="207"/>
    </location>
    <ligand>
        <name>substrate</name>
    </ligand>
</feature>
<feature type="binding site" evidence="1">
    <location>
        <position position="213"/>
    </location>
    <ligand>
        <name>ATP</name>
        <dbReference type="ChEBI" id="CHEBI:30616"/>
    </ligand>
</feature>
<feature type="binding site" evidence="1">
    <location>
        <position position="213"/>
    </location>
    <ligand>
        <name>Mn(2+)</name>
        <dbReference type="ChEBI" id="CHEBI:29035"/>
    </ligand>
</feature>
<feature type="binding site" evidence="1">
    <location>
        <position position="213"/>
    </location>
    <ligand>
        <name>substrate</name>
    </ligand>
</feature>
<feature type="binding site" evidence="1">
    <location>
        <position position="232"/>
    </location>
    <ligand>
        <name>ATP</name>
        <dbReference type="ChEBI" id="CHEBI:30616"/>
    </ligand>
</feature>
<feature type="binding site" evidence="1">
    <location>
        <position position="232"/>
    </location>
    <ligand>
        <name>Mn(2+)</name>
        <dbReference type="ChEBI" id="CHEBI:29035"/>
    </ligand>
</feature>
<feature type="binding site" evidence="1">
    <location>
        <begin position="248"/>
        <end position="256"/>
    </location>
    <ligand>
        <name>ATP</name>
        <dbReference type="ChEBI" id="CHEBI:30616"/>
    </ligand>
</feature>
<feature type="binding site" evidence="1">
    <location>
        <position position="269"/>
    </location>
    <ligand>
        <name>Mn(2+)</name>
        <dbReference type="ChEBI" id="CHEBI:29035"/>
    </ligand>
</feature>
<feature type="binding site" evidence="1">
    <location>
        <position position="297"/>
    </location>
    <ligand>
        <name>ATP</name>
        <dbReference type="ChEBI" id="CHEBI:30616"/>
    </ligand>
</feature>
<feature type="binding site" evidence="1">
    <location>
        <position position="333"/>
    </location>
    <ligand>
        <name>ATP</name>
        <dbReference type="ChEBI" id="CHEBI:30616"/>
    </ligand>
</feature>
<feature type="binding site" evidence="1">
    <location>
        <position position="333"/>
    </location>
    <ligand>
        <name>substrate</name>
    </ligand>
</feature>
<feature type="binding site" evidence="1">
    <location>
        <begin position="449"/>
        <end position="450"/>
    </location>
    <ligand>
        <name>ATP</name>
        <dbReference type="ChEBI" id="CHEBI:30616"/>
    </ligand>
</feature>
<feature type="binding site" evidence="1">
    <location>
        <position position="455"/>
    </location>
    <ligand>
        <name>ATP</name>
        <dbReference type="ChEBI" id="CHEBI:30616"/>
    </ligand>
</feature>
<feature type="modified residue" description="N6-acetyllysine" evidence="1">
    <location>
        <position position="87"/>
    </location>
</feature>
<feature type="modified residue" description="N6-acetyllysine" evidence="1">
    <location>
        <position position="523"/>
    </location>
</feature>